<gene>
    <name type="primary">A238L</name>
</gene>
<sequence length="238" mass="28191">MEHMFPEREIENLFVKWIKKHIRNGNLTLFEEFFKTDPWIVNRCDKNGSSVFMWICIYGRIDFLKFLFEQESYPGEIINPHRRDKDGNSALHYLAEKKNHLILEEVLGYFGKNGTKICLPNFNGMTPVMKAAIRGRTSNVLSLIKFGADPTQKDYHRGFTAWDWAVFTGNMELVKSLNHDYQKPLYMHFPLYKLDVFHRWFKKKPKIIITGCKNNVYEKLPEQNPNFLCVKKLNKYGK</sequence>
<evidence type="ECO:0000250" key="1">
    <source>
        <dbReference type="UniProtKB" id="O36972"/>
    </source>
</evidence>
<evidence type="ECO:0000255" key="2"/>
<evidence type="ECO:0000269" key="3">
    <source>
    </source>
</evidence>
<evidence type="ECO:0000269" key="4">
    <source>
    </source>
</evidence>
<evidence type="ECO:0000269" key="5">
    <source>
    </source>
</evidence>
<evidence type="ECO:0000269" key="6">
    <source>
    </source>
</evidence>
<evidence type="ECO:0000305" key="7"/>
<name>IKBL_ASFB7</name>
<proteinExistence type="evidence at protein level"/>
<dbReference type="EMBL" id="U18466">
    <property type="protein sequence ID" value="AAA65269.1"/>
    <property type="molecule type" value="Genomic_DNA"/>
</dbReference>
<dbReference type="RefSeq" id="NP_042733.1">
    <property type="nucleotide sequence ID" value="NC_001659.2"/>
</dbReference>
<dbReference type="SMR" id="Q76U48"/>
<dbReference type="GeneID" id="22220421"/>
<dbReference type="KEGG" id="vg:22220421"/>
<dbReference type="Proteomes" id="UP000000624">
    <property type="component" value="Segment"/>
</dbReference>
<dbReference type="GO" id="GO:0030430">
    <property type="term" value="C:host cell cytoplasm"/>
    <property type="evidence" value="ECO:0007669"/>
    <property type="project" value="UniProtKB-SubCell"/>
</dbReference>
<dbReference type="GO" id="GO:0042025">
    <property type="term" value="C:host cell nucleus"/>
    <property type="evidence" value="ECO:0007669"/>
    <property type="project" value="UniProtKB-SubCell"/>
</dbReference>
<dbReference type="GO" id="GO:0010468">
    <property type="term" value="P:regulation of gene expression"/>
    <property type="evidence" value="ECO:0007669"/>
    <property type="project" value="TreeGrafter"/>
</dbReference>
<dbReference type="GO" id="GO:0085034">
    <property type="term" value="P:symbiont-mediated suppression of host NF-kappaB cascade"/>
    <property type="evidence" value="ECO:0007669"/>
    <property type="project" value="UniProtKB-KW"/>
</dbReference>
<dbReference type="FunFam" id="1.25.40.20:FF:001205">
    <property type="entry name" value="Predicted protein"/>
    <property type="match status" value="1"/>
</dbReference>
<dbReference type="Gene3D" id="1.25.40.20">
    <property type="entry name" value="Ankyrin repeat-containing domain"/>
    <property type="match status" value="1"/>
</dbReference>
<dbReference type="InterPro" id="IPR002110">
    <property type="entry name" value="Ankyrin_rpt"/>
</dbReference>
<dbReference type="InterPro" id="IPR036770">
    <property type="entry name" value="Ankyrin_rpt-contain_sf"/>
</dbReference>
<dbReference type="PANTHER" id="PTHR24124">
    <property type="entry name" value="ANKYRIN REPEAT FAMILY A"/>
    <property type="match status" value="1"/>
</dbReference>
<dbReference type="PANTHER" id="PTHR24124:SF14">
    <property type="entry name" value="CHROMOSOME UNDETERMINED SCAFFOLD_25, WHOLE GENOME SHOTGUN SEQUENCE"/>
    <property type="match status" value="1"/>
</dbReference>
<dbReference type="Pfam" id="PF00023">
    <property type="entry name" value="Ank"/>
    <property type="match status" value="1"/>
</dbReference>
<dbReference type="Pfam" id="PF12796">
    <property type="entry name" value="Ank_2"/>
    <property type="match status" value="1"/>
</dbReference>
<dbReference type="SMART" id="SM00248">
    <property type="entry name" value="ANK"/>
    <property type="match status" value="4"/>
</dbReference>
<dbReference type="SUPFAM" id="SSF48403">
    <property type="entry name" value="Ankyrin repeat"/>
    <property type="match status" value="1"/>
</dbReference>
<dbReference type="PROSITE" id="PS50297">
    <property type="entry name" value="ANK_REP_REGION"/>
    <property type="match status" value="1"/>
</dbReference>
<dbReference type="PROSITE" id="PS50088">
    <property type="entry name" value="ANK_REPEAT"/>
    <property type="match status" value="1"/>
</dbReference>
<organism>
    <name type="scientific">African swine fever virus (strain Badajoz 1971 Vero-adapted)</name>
    <name type="common">Ba71V</name>
    <name type="synonym">ASFV</name>
    <dbReference type="NCBI Taxonomy" id="10498"/>
    <lineage>
        <taxon>Viruses</taxon>
        <taxon>Varidnaviria</taxon>
        <taxon>Bamfordvirae</taxon>
        <taxon>Nucleocytoviricota</taxon>
        <taxon>Pokkesviricetes</taxon>
        <taxon>Asfuvirales</taxon>
        <taxon>Asfarviridae</taxon>
        <taxon>Asfivirus</taxon>
        <taxon>African swine fever virus</taxon>
    </lineage>
</organism>
<feature type="chain" id="PRO_0000444973" description="IkB-like protein">
    <location>
        <begin position="1"/>
        <end position="238"/>
    </location>
</feature>
<feature type="repeat" description="ANK 1" evidence="2">
    <location>
        <begin position="48"/>
        <end position="77"/>
    </location>
</feature>
<feature type="repeat" description="ANK 2" evidence="2">
    <location>
        <begin position="86"/>
        <end position="115"/>
    </location>
</feature>
<feature type="repeat" description="ANK 3" evidence="2">
    <location>
        <begin position="123"/>
        <end position="152"/>
    </location>
</feature>
<feature type="repeat" description="ANK 4" evidence="2">
    <location>
        <begin position="157"/>
        <end position="187"/>
    </location>
</feature>
<feature type="short sequence motif" description="Nuclear localization signal" evidence="5">
    <location>
        <begin position="80"/>
        <end position="86"/>
    </location>
</feature>
<feature type="short sequence motif" description="Nuclear localization signal" evidence="5">
    <location>
        <begin position="202"/>
        <end position="213"/>
    </location>
</feature>
<feature type="short sequence motif" description="PxIxITxC motif; Interaction with host PPP3CA" evidence="1">
    <location>
        <begin position="205"/>
        <end position="212"/>
    </location>
</feature>
<feature type="short sequence motif" description="FLCV motif" evidence="1">
    <location>
        <begin position="227"/>
        <end position="230"/>
    </location>
</feature>
<comment type="function">
    <text evidence="1 3">I-kappa-B- (IkB)-like protein that inhibits the binding of NF-kappa-B to DNA, thereby down-regulating pro-inflammatory cytokine production (By similarity). Forms a heterodimer with the NF-kappa-B subunit RELA/p65 and prevents the activation of the NF-kappa-B transcription factor (PubMed:10934190). Also inhibits the host calcineurin phosphatase activity, which is required for the induction of nuclear factor of activated T cells(NFAT)-dependent immune response genes (By similarity). Inhibits calcineurin function, which is required for the induction of nuclear factor of activated T cells (NFAT)-dependent immune response genes (By similarity). Prevents the binding of substrates to calcineurin without affecting the phosphatase activity (By similarity). Does not contain the serine residues that are phosphorylated by host IkB kinase and thus is not degraded following stimulation of the NFkB pathway (PubMed:10934190).</text>
</comment>
<comment type="subunit">
    <text evidence="1 3 4 5">Interacts with host PPIA (By similarity). Interacts with host PPP3CA/Calcineurin (PubMed:18261759). Interacts with host RELA/p65; interaction of the 32 kDa form with host RELA results in the formation of a stable complex with NF-kappa-B (PubMed:10934190). Interacts with host PPP3R1 (By similarity). Interacts with host EP300; this interaction inhibits the association of host EP300 with host RELA, JUN and NFATC2 (PubMed:16365438).</text>
</comment>
<comment type="subcellular location">
    <subcellularLocation>
        <location evidence="4 5">Host nucleus</location>
    </subcellularLocation>
    <subcellularLocation>
        <location evidence="5">Host cytoplasm</location>
    </subcellularLocation>
    <text evidence="5">Binding to host PPP3CA/Calcineurin may mask the second nuclear localization signal thereby contributing to the cytoplasmic retention of A238L.</text>
</comment>
<comment type="induction">
    <text evidence="6">Expressed in the early phase of the viral replicative cycle.</text>
</comment>
<comment type="domain">
    <text evidence="1">The C-terminal region contains the docking motifs PxIxITxC and FLCV, which are required and sufficient for binding to host calcineurin.</text>
</comment>
<comment type="PTM">
    <text evidence="3">The protein exists in a 28 kDa and a 32 kDa form, probably due to post-translational modifications which are neither phosphorylation, nor sumoylation.</text>
</comment>
<comment type="similarity">
    <text evidence="7">Belongs to the asfivirus A238L family.</text>
</comment>
<protein>
    <recommendedName>
        <fullName>IkB-like protein</fullName>
    </recommendedName>
    <alternativeName>
        <fullName>Ankyrin repeat domain-containing protein A238L</fullName>
    </alternativeName>
    <alternativeName>
        <fullName>p28</fullName>
    </alternativeName>
</protein>
<organismHost>
    <name type="scientific">Ornithodoros</name>
    <name type="common">relapsing fever ticks</name>
    <dbReference type="NCBI Taxonomy" id="6937"/>
</organismHost>
<organismHost>
    <name type="scientific">Sus scrofa</name>
    <name type="common">Pig</name>
    <dbReference type="NCBI Taxonomy" id="9823"/>
</organismHost>
<accession>Q76U48</accession>
<reference key="1">
    <citation type="journal article" date="1995" name="Virology">
        <title>Analysis of the complete nucleotide sequence of African swine fever virus.</title>
        <authorList>
            <person name="Yanez R.J."/>
            <person name="Rodriguez J.M."/>
            <person name="Nogal M.L."/>
            <person name="Yuste L."/>
            <person name="Enriquez C."/>
            <person name="Rodriguez J.F."/>
            <person name="Vinuela E."/>
        </authorList>
    </citation>
    <scope>NUCLEOTIDE SEQUENCE [LARGE SCALE GENOMIC DNA]</scope>
</reference>
<reference key="2">
    <citation type="journal article" date="2000" name="J. Biol. Chem.">
        <title>Mechanism of inactivation of NF-kappa B by a viral homologue of I kappa b alpha. Signal-induced release of i kappa b alpha results in binding of the viral homologue to NF-kappa B.</title>
        <authorList>
            <person name="Tait S.W."/>
            <person name="Reid E.B."/>
            <person name="Greaves D.R."/>
            <person name="Wileman T.E."/>
            <person name="Powell P.P."/>
        </authorList>
    </citation>
    <scope>FUNCTION</scope>
    <scope>ABSENCE OF PHOSPHORYLATION</scope>
    <scope>ABSENCE OF SUMOYLATION</scope>
    <scope>INTERACTION WITH HOST RELA</scope>
</reference>
<reference key="3">
    <citation type="journal article" date="2006" name="J. Immunol.">
        <title>The viral protein A238L inhibits TNF-alpha expression through a CBP/p300 transcriptional coactivators pathway.</title>
        <authorList>
            <person name="Granja A.G."/>
            <person name="Nogal M.L."/>
            <person name="Hurtado C."/>
            <person name="Del Aguila C."/>
            <person name="Carrascosa A.L."/>
            <person name="Salas M.L."/>
            <person name="Fresno M."/>
            <person name="Revilla Y."/>
        </authorList>
    </citation>
    <scope>INTERACTION WITH HOST EP300</scope>
    <scope>SUBCELLULAR LOCATION</scope>
</reference>
<reference key="4">
    <citation type="journal article" date="2008" name="Virology">
        <title>Domains involved in calcineurin phosphatase inhibition and nuclear localisation in the African swine fever virus A238L protein.</title>
        <authorList>
            <person name="Abrams C.C."/>
            <person name="Chapman D.A."/>
            <person name="Silk R."/>
            <person name="Liverani E."/>
            <person name="Dixon L.K."/>
        </authorList>
    </citation>
    <scope>SUBCELLULAR LOCATION</scope>
    <scope>NUCLEAR LOCALIZATION SIGNALS</scope>
    <scope>INTERACTION WITH HOST PPP3CA</scope>
</reference>
<reference key="5">
    <citation type="journal article" date="2020" name="J. Virol.">
        <title>The African Swine Fever Virus Transcriptome.</title>
        <authorList>
            <person name="Cackett G."/>
            <person name="Matelska D."/>
            <person name="Sykora M."/>
            <person name="Portugal R."/>
            <person name="Malecki M."/>
            <person name="Baehler J."/>
            <person name="Dixon L."/>
            <person name="Werner F."/>
        </authorList>
    </citation>
    <scope>INDUCTION</scope>
</reference>
<keyword id="KW-0040">ANK repeat</keyword>
<keyword id="KW-0244">Early protein</keyword>
<keyword id="KW-1035">Host cytoplasm</keyword>
<keyword id="KW-1048">Host nucleus</keyword>
<keyword id="KW-0945">Host-virus interaction</keyword>
<keyword id="KW-1100">Inhibition of host NF-kappa-B by virus</keyword>
<keyword id="KW-1185">Reference proteome</keyword>
<keyword id="KW-0677">Repeat</keyword>
<keyword id="KW-0832">Ubl conjugation</keyword>